<proteinExistence type="inferred from homology"/>
<keyword id="KW-0067">ATP-binding</keyword>
<keyword id="KW-0436">Ligase</keyword>
<keyword id="KW-0547">Nucleotide-binding</keyword>
<keyword id="KW-0648">Protein biosynthesis</keyword>
<keyword id="KW-1185">Reference proteome</keyword>
<evidence type="ECO:0000255" key="1">
    <source>
        <dbReference type="HAMAP-Rule" id="MF_00122"/>
    </source>
</evidence>
<gene>
    <name evidence="1" type="primary">gatC</name>
    <name type="ordered locus">AZC_2843</name>
</gene>
<comment type="function">
    <text evidence="1">Allows the formation of correctly charged Asn-tRNA(Asn) or Gln-tRNA(Gln) through the transamidation of misacylated Asp-tRNA(Asn) or Glu-tRNA(Gln) in organisms which lack either or both of asparaginyl-tRNA or glutaminyl-tRNA synthetases. The reaction takes place in the presence of glutamine and ATP through an activated phospho-Asp-tRNA(Asn) or phospho-Glu-tRNA(Gln).</text>
</comment>
<comment type="catalytic activity">
    <reaction evidence="1">
        <text>L-glutamyl-tRNA(Gln) + L-glutamine + ATP + H2O = L-glutaminyl-tRNA(Gln) + L-glutamate + ADP + phosphate + H(+)</text>
        <dbReference type="Rhea" id="RHEA:17521"/>
        <dbReference type="Rhea" id="RHEA-COMP:9681"/>
        <dbReference type="Rhea" id="RHEA-COMP:9684"/>
        <dbReference type="ChEBI" id="CHEBI:15377"/>
        <dbReference type="ChEBI" id="CHEBI:15378"/>
        <dbReference type="ChEBI" id="CHEBI:29985"/>
        <dbReference type="ChEBI" id="CHEBI:30616"/>
        <dbReference type="ChEBI" id="CHEBI:43474"/>
        <dbReference type="ChEBI" id="CHEBI:58359"/>
        <dbReference type="ChEBI" id="CHEBI:78520"/>
        <dbReference type="ChEBI" id="CHEBI:78521"/>
        <dbReference type="ChEBI" id="CHEBI:456216"/>
    </reaction>
</comment>
<comment type="catalytic activity">
    <reaction evidence="1">
        <text>L-aspartyl-tRNA(Asn) + L-glutamine + ATP + H2O = L-asparaginyl-tRNA(Asn) + L-glutamate + ADP + phosphate + 2 H(+)</text>
        <dbReference type="Rhea" id="RHEA:14513"/>
        <dbReference type="Rhea" id="RHEA-COMP:9674"/>
        <dbReference type="Rhea" id="RHEA-COMP:9677"/>
        <dbReference type="ChEBI" id="CHEBI:15377"/>
        <dbReference type="ChEBI" id="CHEBI:15378"/>
        <dbReference type="ChEBI" id="CHEBI:29985"/>
        <dbReference type="ChEBI" id="CHEBI:30616"/>
        <dbReference type="ChEBI" id="CHEBI:43474"/>
        <dbReference type="ChEBI" id="CHEBI:58359"/>
        <dbReference type="ChEBI" id="CHEBI:78515"/>
        <dbReference type="ChEBI" id="CHEBI:78516"/>
        <dbReference type="ChEBI" id="CHEBI:456216"/>
    </reaction>
</comment>
<comment type="subunit">
    <text evidence="1">Heterotrimer of A, B and C subunits.</text>
</comment>
<comment type="similarity">
    <text evidence="1">Belongs to the GatC family.</text>
</comment>
<feature type="chain" id="PRO_1000071382" description="Aspartyl/glutamyl-tRNA(Asn/Gln) amidotransferase subunit C">
    <location>
        <begin position="1"/>
        <end position="95"/>
    </location>
</feature>
<name>GATC_AZOC5</name>
<accession>A8I9X4</accession>
<organism>
    <name type="scientific">Azorhizobium caulinodans (strain ATCC 43989 / DSM 5975 / JCM 20966 / LMG 6465 / NBRC 14845 / NCIMB 13405 / ORS 571)</name>
    <dbReference type="NCBI Taxonomy" id="438753"/>
    <lineage>
        <taxon>Bacteria</taxon>
        <taxon>Pseudomonadati</taxon>
        <taxon>Pseudomonadota</taxon>
        <taxon>Alphaproteobacteria</taxon>
        <taxon>Hyphomicrobiales</taxon>
        <taxon>Xanthobacteraceae</taxon>
        <taxon>Azorhizobium</taxon>
    </lineage>
</organism>
<protein>
    <recommendedName>
        <fullName evidence="1">Aspartyl/glutamyl-tRNA(Asn/Gln) amidotransferase subunit C</fullName>
        <shortName evidence="1">Asp/Glu-ADT subunit C</shortName>
        <ecNumber evidence="1">6.3.5.-</ecNumber>
    </recommendedName>
</protein>
<sequence>MSVDQATVRRVAHLARIAVSEEELEPLKGELNAILAFVEQLANLDVADVEPMTGVIPMELPMREDVVTDGHYPEKILANAPEAEGGFFTVPKVVE</sequence>
<reference key="1">
    <citation type="submission" date="2007-04" db="EMBL/GenBank/DDBJ databases">
        <title>Complete genome sequence of the nitrogen-fixing bacterium Azorhizobium caulinodans ORS571.</title>
        <authorList>
            <person name="Lee K.B."/>
            <person name="Backer P.D."/>
            <person name="Aono T."/>
            <person name="Liu C.T."/>
            <person name="Suzuki S."/>
            <person name="Suzuki T."/>
            <person name="Kaneko T."/>
            <person name="Yamada M."/>
            <person name="Tabata S."/>
            <person name="Kupfer D.M."/>
            <person name="Najar F.Z."/>
            <person name="Wiley G.B."/>
            <person name="Roe B."/>
            <person name="Binnewies T."/>
            <person name="Ussery D."/>
            <person name="Vereecke D."/>
            <person name="Gevers D."/>
            <person name="Holsters M."/>
            <person name="Oyaizu H."/>
        </authorList>
    </citation>
    <scope>NUCLEOTIDE SEQUENCE [LARGE SCALE GENOMIC DNA]</scope>
    <source>
        <strain>ATCC 43989 / DSM 5975 / JCM 20966 / LMG 6465 / NBRC 14845 / NCIMB 13405 / ORS 571</strain>
    </source>
</reference>
<dbReference type="EC" id="6.3.5.-" evidence="1"/>
<dbReference type="EMBL" id="AP009384">
    <property type="protein sequence ID" value="BAF88841.1"/>
    <property type="molecule type" value="Genomic_DNA"/>
</dbReference>
<dbReference type="RefSeq" id="WP_012171367.1">
    <property type="nucleotide sequence ID" value="NC_009937.1"/>
</dbReference>
<dbReference type="SMR" id="A8I9X4"/>
<dbReference type="STRING" id="438753.AZC_2843"/>
<dbReference type="KEGG" id="azc:AZC_2843"/>
<dbReference type="eggNOG" id="COG0721">
    <property type="taxonomic scope" value="Bacteria"/>
</dbReference>
<dbReference type="HOGENOM" id="CLU_105899_2_0_5"/>
<dbReference type="Proteomes" id="UP000000270">
    <property type="component" value="Chromosome"/>
</dbReference>
<dbReference type="GO" id="GO:0050566">
    <property type="term" value="F:asparaginyl-tRNA synthase (glutamine-hydrolyzing) activity"/>
    <property type="evidence" value="ECO:0007669"/>
    <property type="project" value="RHEA"/>
</dbReference>
<dbReference type="GO" id="GO:0005524">
    <property type="term" value="F:ATP binding"/>
    <property type="evidence" value="ECO:0007669"/>
    <property type="project" value="UniProtKB-KW"/>
</dbReference>
<dbReference type="GO" id="GO:0050567">
    <property type="term" value="F:glutaminyl-tRNA synthase (glutamine-hydrolyzing) activity"/>
    <property type="evidence" value="ECO:0007669"/>
    <property type="project" value="UniProtKB-UniRule"/>
</dbReference>
<dbReference type="GO" id="GO:0070681">
    <property type="term" value="P:glutaminyl-tRNAGln biosynthesis via transamidation"/>
    <property type="evidence" value="ECO:0007669"/>
    <property type="project" value="TreeGrafter"/>
</dbReference>
<dbReference type="GO" id="GO:0006450">
    <property type="term" value="P:regulation of translational fidelity"/>
    <property type="evidence" value="ECO:0007669"/>
    <property type="project" value="InterPro"/>
</dbReference>
<dbReference type="GO" id="GO:0006412">
    <property type="term" value="P:translation"/>
    <property type="evidence" value="ECO:0007669"/>
    <property type="project" value="UniProtKB-UniRule"/>
</dbReference>
<dbReference type="Gene3D" id="1.10.20.60">
    <property type="entry name" value="Glu-tRNAGln amidotransferase C subunit, N-terminal domain"/>
    <property type="match status" value="1"/>
</dbReference>
<dbReference type="HAMAP" id="MF_00122">
    <property type="entry name" value="GatC"/>
    <property type="match status" value="1"/>
</dbReference>
<dbReference type="InterPro" id="IPR036113">
    <property type="entry name" value="Asp/Glu-ADT_sf_sub_c"/>
</dbReference>
<dbReference type="InterPro" id="IPR003837">
    <property type="entry name" value="GatC"/>
</dbReference>
<dbReference type="NCBIfam" id="TIGR00135">
    <property type="entry name" value="gatC"/>
    <property type="match status" value="1"/>
</dbReference>
<dbReference type="PANTHER" id="PTHR15004">
    <property type="entry name" value="GLUTAMYL-TRNA(GLN) AMIDOTRANSFERASE SUBUNIT C, MITOCHONDRIAL"/>
    <property type="match status" value="1"/>
</dbReference>
<dbReference type="PANTHER" id="PTHR15004:SF0">
    <property type="entry name" value="GLUTAMYL-TRNA(GLN) AMIDOTRANSFERASE SUBUNIT C, MITOCHONDRIAL"/>
    <property type="match status" value="1"/>
</dbReference>
<dbReference type="Pfam" id="PF02686">
    <property type="entry name" value="GatC"/>
    <property type="match status" value="1"/>
</dbReference>
<dbReference type="SUPFAM" id="SSF141000">
    <property type="entry name" value="Glu-tRNAGln amidotransferase C subunit"/>
    <property type="match status" value="1"/>
</dbReference>